<organism>
    <name type="scientific">Colwellia psychrerythraea (strain 34H / ATCC BAA-681)</name>
    <name type="common">Vibrio psychroerythus</name>
    <dbReference type="NCBI Taxonomy" id="167879"/>
    <lineage>
        <taxon>Bacteria</taxon>
        <taxon>Pseudomonadati</taxon>
        <taxon>Pseudomonadota</taxon>
        <taxon>Gammaproteobacteria</taxon>
        <taxon>Alteromonadales</taxon>
        <taxon>Colwelliaceae</taxon>
        <taxon>Colwellia</taxon>
    </lineage>
</organism>
<sequence length="893" mass="101261">MFGNLLTKMFGSRNDRLLKQMSKEVTKINALEPVLEALSDEELKAKTTEFKERFTQGETVEQLLVEAFAVVREASKRVFGMRHFDVQMIGGMVLNEGKIAEMRTGEGKTLTATLPSYLNALTDKGVHVITVNDYLATRDADWSRPLFEFLGLTVGCNVAGMTTQDKQAAYQSDITYGTNNEFGFDYLRDNMVFSPQERSQKPLHFAIIDEVDSILIDEARTPLIISGQAEDSSALYKIINTLVPTLEQQEEEDKEGEESTGDFTIDEKAKQVYLTERGQIHIEEIMVEKELLTAGDTLFSAANITLLHHVMAALRAHKLFQKDVDYIVKDDEIVIVDEHTGRTMEGRRWSEGLHQAVEAKEGVNIQNENQTLASITFQNYFRIYEKLSGMTGTADTEAFEFNHIYGLETVIIPTNQPMVRKDLSDLIYLTTEEKFEAILADIQDCVKRGQPVLVGTIAIETSEFLSDFLKKAKIKHKVLNAKFHQQEAEIVADAGKENAVTIATNMAGRGTDIVLGGNLDATIAKLTNPSEDDIAKAKAQWKIDHERVLELGGLHIVATERHESRRIDNQLRGRSGRQGDEGSTRFYLSMEDSLMRIFASERISNMMRKLGMEKGEAIEHPWVTRSIENAQRKVEGRNFDMRKQLLEYDDVANDQRGVIYEQRNELLDNEEIGSVVEAIRSDVINGVIDQHIPRQSLDEMWDIEGLEEQLKGEYATELTIAKWLEDDSKLHEESLREKIITEFEQAYKDKEEAVGVDVLRQFEKAVMLQSLDSHWKEHLSAMDHLRQGIGLRAHAQKNPKQEFKRESFELFTEMLDNLKYDVVGILSKVQIRAESDVEAVEEQHRKSEEVPMDFQHQSASSPSEQAQTPRVGRNEPCPCGSGKKYKQCHGKLA</sequence>
<feature type="chain" id="PRO_0000320786" description="Protein translocase subunit SecA">
    <location>
        <begin position="1"/>
        <end position="893"/>
    </location>
</feature>
<feature type="region of interest" description="Disordered" evidence="2">
    <location>
        <begin position="840"/>
        <end position="893"/>
    </location>
</feature>
<feature type="compositionally biased region" description="Basic and acidic residues" evidence="2">
    <location>
        <begin position="840"/>
        <end position="849"/>
    </location>
</feature>
<feature type="compositionally biased region" description="Polar residues" evidence="2">
    <location>
        <begin position="855"/>
        <end position="868"/>
    </location>
</feature>
<feature type="compositionally biased region" description="Basic residues" evidence="2">
    <location>
        <begin position="883"/>
        <end position="893"/>
    </location>
</feature>
<feature type="binding site" evidence="1">
    <location>
        <position position="87"/>
    </location>
    <ligand>
        <name>ATP</name>
        <dbReference type="ChEBI" id="CHEBI:30616"/>
    </ligand>
</feature>
<feature type="binding site" evidence="1">
    <location>
        <begin position="105"/>
        <end position="109"/>
    </location>
    <ligand>
        <name>ATP</name>
        <dbReference type="ChEBI" id="CHEBI:30616"/>
    </ligand>
</feature>
<feature type="binding site" evidence="1">
    <location>
        <position position="512"/>
    </location>
    <ligand>
        <name>ATP</name>
        <dbReference type="ChEBI" id="CHEBI:30616"/>
    </ligand>
</feature>
<feature type="binding site" evidence="1">
    <location>
        <position position="877"/>
    </location>
    <ligand>
        <name>Zn(2+)</name>
        <dbReference type="ChEBI" id="CHEBI:29105"/>
    </ligand>
</feature>
<feature type="binding site" evidence="1">
    <location>
        <position position="879"/>
    </location>
    <ligand>
        <name>Zn(2+)</name>
        <dbReference type="ChEBI" id="CHEBI:29105"/>
    </ligand>
</feature>
<feature type="binding site" evidence="1">
    <location>
        <position position="888"/>
    </location>
    <ligand>
        <name>Zn(2+)</name>
        <dbReference type="ChEBI" id="CHEBI:29105"/>
    </ligand>
</feature>
<feature type="binding site" evidence="1">
    <location>
        <position position="889"/>
    </location>
    <ligand>
        <name>Zn(2+)</name>
        <dbReference type="ChEBI" id="CHEBI:29105"/>
    </ligand>
</feature>
<keyword id="KW-0067">ATP-binding</keyword>
<keyword id="KW-0997">Cell inner membrane</keyword>
<keyword id="KW-1003">Cell membrane</keyword>
<keyword id="KW-0963">Cytoplasm</keyword>
<keyword id="KW-0472">Membrane</keyword>
<keyword id="KW-0479">Metal-binding</keyword>
<keyword id="KW-0547">Nucleotide-binding</keyword>
<keyword id="KW-0653">Protein transport</keyword>
<keyword id="KW-1278">Translocase</keyword>
<keyword id="KW-0811">Translocation</keyword>
<keyword id="KW-0813">Transport</keyword>
<keyword id="KW-0862">Zinc</keyword>
<gene>
    <name evidence="1" type="primary">secA</name>
    <name type="ordered locus">CPS_4454</name>
</gene>
<reference key="1">
    <citation type="journal article" date="2005" name="Proc. Natl. Acad. Sci. U.S.A.">
        <title>The psychrophilic lifestyle as revealed by the genome sequence of Colwellia psychrerythraea 34H through genomic and proteomic analyses.</title>
        <authorList>
            <person name="Methe B.A."/>
            <person name="Nelson K.E."/>
            <person name="Deming J.W."/>
            <person name="Momen B."/>
            <person name="Melamud E."/>
            <person name="Zhang X."/>
            <person name="Moult J."/>
            <person name="Madupu R."/>
            <person name="Nelson W.C."/>
            <person name="Dodson R.J."/>
            <person name="Brinkac L.M."/>
            <person name="Daugherty S.C."/>
            <person name="Durkin A.S."/>
            <person name="DeBoy R.T."/>
            <person name="Kolonay J.F."/>
            <person name="Sullivan S.A."/>
            <person name="Zhou L."/>
            <person name="Davidsen T.M."/>
            <person name="Wu M."/>
            <person name="Huston A.L."/>
            <person name="Lewis M."/>
            <person name="Weaver B."/>
            <person name="Weidman J.F."/>
            <person name="Khouri H."/>
            <person name="Utterback T.R."/>
            <person name="Feldblyum T.V."/>
            <person name="Fraser C.M."/>
        </authorList>
    </citation>
    <scope>NUCLEOTIDE SEQUENCE [LARGE SCALE GENOMIC DNA]</scope>
    <source>
        <strain>34H / ATCC BAA-681</strain>
    </source>
</reference>
<proteinExistence type="inferred from homology"/>
<evidence type="ECO:0000255" key="1">
    <source>
        <dbReference type="HAMAP-Rule" id="MF_01382"/>
    </source>
</evidence>
<evidence type="ECO:0000256" key="2">
    <source>
        <dbReference type="SAM" id="MobiDB-lite"/>
    </source>
</evidence>
<protein>
    <recommendedName>
        <fullName evidence="1">Protein translocase subunit SecA</fullName>
        <ecNumber evidence="1">7.4.2.8</ecNumber>
    </recommendedName>
</protein>
<comment type="function">
    <text evidence="1">Part of the Sec protein translocase complex. Interacts with the SecYEG preprotein conducting channel. Has a central role in coupling the hydrolysis of ATP to the transfer of proteins into and across the cell membrane, serving both as a receptor for the preprotein-SecB complex and as an ATP-driven molecular motor driving the stepwise translocation of polypeptide chains across the membrane.</text>
</comment>
<comment type="catalytic activity">
    <reaction evidence="1">
        <text>ATP + H2O + cellular proteinSide 1 = ADP + phosphate + cellular proteinSide 2.</text>
        <dbReference type="EC" id="7.4.2.8"/>
    </reaction>
</comment>
<comment type="cofactor">
    <cofactor evidence="1">
        <name>Zn(2+)</name>
        <dbReference type="ChEBI" id="CHEBI:29105"/>
    </cofactor>
    <text evidence="1">May bind 1 zinc ion per subunit.</text>
</comment>
<comment type="subunit">
    <text evidence="1">Monomer and homodimer. Part of the essential Sec protein translocation apparatus which comprises SecA, SecYEG and auxiliary proteins SecDF-YajC and YidC.</text>
</comment>
<comment type="subcellular location">
    <subcellularLocation>
        <location evidence="1">Cell inner membrane</location>
        <topology evidence="1">Peripheral membrane protein</topology>
        <orientation evidence="1">Cytoplasmic side</orientation>
    </subcellularLocation>
    <subcellularLocation>
        <location evidence="1">Cytoplasm</location>
    </subcellularLocation>
    <text evidence="1">Distribution is 50-50.</text>
</comment>
<comment type="similarity">
    <text evidence="1">Belongs to the SecA family.</text>
</comment>
<accession>Q47VS0</accession>
<dbReference type="EC" id="7.4.2.8" evidence="1"/>
<dbReference type="EMBL" id="CP000083">
    <property type="protein sequence ID" value="AAZ28215.1"/>
    <property type="molecule type" value="Genomic_DNA"/>
</dbReference>
<dbReference type="RefSeq" id="WP_011045183.1">
    <property type="nucleotide sequence ID" value="NC_003910.7"/>
</dbReference>
<dbReference type="SMR" id="Q47VS0"/>
<dbReference type="STRING" id="167879.CPS_4454"/>
<dbReference type="KEGG" id="cps:CPS_4454"/>
<dbReference type="eggNOG" id="COG0653">
    <property type="taxonomic scope" value="Bacteria"/>
</dbReference>
<dbReference type="HOGENOM" id="CLU_005314_3_0_6"/>
<dbReference type="Proteomes" id="UP000000547">
    <property type="component" value="Chromosome"/>
</dbReference>
<dbReference type="GO" id="GO:0031522">
    <property type="term" value="C:cell envelope Sec protein transport complex"/>
    <property type="evidence" value="ECO:0007669"/>
    <property type="project" value="TreeGrafter"/>
</dbReference>
<dbReference type="GO" id="GO:0005829">
    <property type="term" value="C:cytosol"/>
    <property type="evidence" value="ECO:0007669"/>
    <property type="project" value="TreeGrafter"/>
</dbReference>
<dbReference type="GO" id="GO:0005886">
    <property type="term" value="C:plasma membrane"/>
    <property type="evidence" value="ECO:0007669"/>
    <property type="project" value="UniProtKB-SubCell"/>
</dbReference>
<dbReference type="GO" id="GO:0005524">
    <property type="term" value="F:ATP binding"/>
    <property type="evidence" value="ECO:0007669"/>
    <property type="project" value="UniProtKB-UniRule"/>
</dbReference>
<dbReference type="GO" id="GO:0046872">
    <property type="term" value="F:metal ion binding"/>
    <property type="evidence" value="ECO:0007669"/>
    <property type="project" value="UniProtKB-KW"/>
</dbReference>
<dbReference type="GO" id="GO:0008564">
    <property type="term" value="F:protein-exporting ATPase activity"/>
    <property type="evidence" value="ECO:0007669"/>
    <property type="project" value="UniProtKB-EC"/>
</dbReference>
<dbReference type="GO" id="GO:0065002">
    <property type="term" value="P:intracellular protein transmembrane transport"/>
    <property type="evidence" value="ECO:0007669"/>
    <property type="project" value="UniProtKB-UniRule"/>
</dbReference>
<dbReference type="GO" id="GO:0017038">
    <property type="term" value="P:protein import"/>
    <property type="evidence" value="ECO:0007669"/>
    <property type="project" value="InterPro"/>
</dbReference>
<dbReference type="GO" id="GO:0006605">
    <property type="term" value="P:protein targeting"/>
    <property type="evidence" value="ECO:0007669"/>
    <property type="project" value="UniProtKB-UniRule"/>
</dbReference>
<dbReference type="GO" id="GO:0043952">
    <property type="term" value="P:protein transport by the Sec complex"/>
    <property type="evidence" value="ECO:0007669"/>
    <property type="project" value="TreeGrafter"/>
</dbReference>
<dbReference type="CDD" id="cd17928">
    <property type="entry name" value="DEXDc_SecA"/>
    <property type="match status" value="1"/>
</dbReference>
<dbReference type="CDD" id="cd18803">
    <property type="entry name" value="SF2_C_secA"/>
    <property type="match status" value="1"/>
</dbReference>
<dbReference type="FunFam" id="3.40.50.300:FF:000113">
    <property type="entry name" value="Preprotein translocase subunit SecA"/>
    <property type="match status" value="1"/>
</dbReference>
<dbReference type="FunFam" id="3.90.1440.10:FF:000001">
    <property type="entry name" value="Preprotein translocase subunit SecA"/>
    <property type="match status" value="1"/>
</dbReference>
<dbReference type="FunFam" id="1.10.3060.10:FF:000003">
    <property type="entry name" value="Protein translocase subunit SecA"/>
    <property type="match status" value="1"/>
</dbReference>
<dbReference type="Gene3D" id="1.10.3060.10">
    <property type="entry name" value="Helical scaffold and wing domains of SecA"/>
    <property type="match status" value="1"/>
</dbReference>
<dbReference type="Gene3D" id="3.40.50.300">
    <property type="entry name" value="P-loop containing nucleotide triphosphate hydrolases"/>
    <property type="match status" value="2"/>
</dbReference>
<dbReference type="Gene3D" id="3.90.1440.10">
    <property type="entry name" value="SecA, preprotein cross-linking domain"/>
    <property type="match status" value="1"/>
</dbReference>
<dbReference type="HAMAP" id="MF_01382">
    <property type="entry name" value="SecA"/>
    <property type="match status" value="1"/>
</dbReference>
<dbReference type="InterPro" id="IPR014001">
    <property type="entry name" value="Helicase_ATP-bd"/>
</dbReference>
<dbReference type="InterPro" id="IPR001650">
    <property type="entry name" value="Helicase_C-like"/>
</dbReference>
<dbReference type="InterPro" id="IPR027417">
    <property type="entry name" value="P-loop_NTPase"/>
</dbReference>
<dbReference type="InterPro" id="IPR004027">
    <property type="entry name" value="SEC_C_motif"/>
</dbReference>
<dbReference type="InterPro" id="IPR000185">
    <property type="entry name" value="SecA"/>
</dbReference>
<dbReference type="InterPro" id="IPR020937">
    <property type="entry name" value="SecA_CS"/>
</dbReference>
<dbReference type="InterPro" id="IPR011115">
    <property type="entry name" value="SecA_DEAD"/>
</dbReference>
<dbReference type="InterPro" id="IPR014018">
    <property type="entry name" value="SecA_motor_DEAD"/>
</dbReference>
<dbReference type="InterPro" id="IPR011130">
    <property type="entry name" value="SecA_preprotein_X-link_dom"/>
</dbReference>
<dbReference type="InterPro" id="IPR044722">
    <property type="entry name" value="SecA_SF2_C"/>
</dbReference>
<dbReference type="InterPro" id="IPR011116">
    <property type="entry name" value="SecA_Wing/Scaffold"/>
</dbReference>
<dbReference type="InterPro" id="IPR036266">
    <property type="entry name" value="SecA_Wing/Scaffold_sf"/>
</dbReference>
<dbReference type="InterPro" id="IPR036670">
    <property type="entry name" value="SecA_X-link_sf"/>
</dbReference>
<dbReference type="NCBIfam" id="NF009538">
    <property type="entry name" value="PRK12904.1"/>
    <property type="match status" value="1"/>
</dbReference>
<dbReference type="NCBIfam" id="TIGR00963">
    <property type="entry name" value="secA"/>
    <property type="match status" value="1"/>
</dbReference>
<dbReference type="PANTHER" id="PTHR30612:SF0">
    <property type="entry name" value="CHLOROPLAST PROTEIN-TRANSPORTING ATPASE"/>
    <property type="match status" value="1"/>
</dbReference>
<dbReference type="PANTHER" id="PTHR30612">
    <property type="entry name" value="SECA INNER MEMBRANE COMPONENT OF SEC PROTEIN SECRETION SYSTEM"/>
    <property type="match status" value="1"/>
</dbReference>
<dbReference type="Pfam" id="PF21090">
    <property type="entry name" value="P-loop_SecA"/>
    <property type="match status" value="1"/>
</dbReference>
<dbReference type="Pfam" id="PF02810">
    <property type="entry name" value="SEC-C"/>
    <property type="match status" value="1"/>
</dbReference>
<dbReference type="Pfam" id="PF07517">
    <property type="entry name" value="SecA_DEAD"/>
    <property type="match status" value="1"/>
</dbReference>
<dbReference type="Pfam" id="PF01043">
    <property type="entry name" value="SecA_PP_bind"/>
    <property type="match status" value="1"/>
</dbReference>
<dbReference type="Pfam" id="PF07516">
    <property type="entry name" value="SecA_SW"/>
    <property type="match status" value="1"/>
</dbReference>
<dbReference type="PRINTS" id="PR00906">
    <property type="entry name" value="SECA"/>
</dbReference>
<dbReference type="SMART" id="SM00957">
    <property type="entry name" value="SecA_DEAD"/>
    <property type="match status" value="1"/>
</dbReference>
<dbReference type="SMART" id="SM00958">
    <property type="entry name" value="SecA_PP_bind"/>
    <property type="match status" value="1"/>
</dbReference>
<dbReference type="SUPFAM" id="SSF81886">
    <property type="entry name" value="Helical scaffold and wing domains of SecA"/>
    <property type="match status" value="1"/>
</dbReference>
<dbReference type="SUPFAM" id="SSF52540">
    <property type="entry name" value="P-loop containing nucleoside triphosphate hydrolases"/>
    <property type="match status" value="2"/>
</dbReference>
<dbReference type="SUPFAM" id="SSF81767">
    <property type="entry name" value="Pre-protein crosslinking domain of SecA"/>
    <property type="match status" value="1"/>
</dbReference>
<dbReference type="PROSITE" id="PS01312">
    <property type="entry name" value="SECA"/>
    <property type="match status" value="1"/>
</dbReference>
<dbReference type="PROSITE" id="PS51196">
    <property type="entry name" value="SECA_MOTOR_DEAD"/>
    <property type="match status" value="1"/>
</dbReference>
<name>SECA_COLP3</name>